<dbReference type="EMBL" id="CP000235">
    <property type="protein sequence ID" value="ABD44315.1"/>
    <property type="molecule type" value="Genomic_DNA"/>
</dbReference>
<dbReference type="SMR" id="Q2GJI3"/>
<dbReference type="STRING" id="212042.APH_0893"/>
<dbReference type="PaxDb" id="212042-APH_0893"/>
<dbReference type="EnsemblBacteria" id="ABD44315">
    <property type="protein sequence ID" value="ABD44315"/>
    <property type="gene ID" value="APH_0893"/>
</dbReference>
<dbReference type="KEGG" id="aph:APH_0893"/>
<dbReference type="eggNOG" id="COG0326">
    <property type="taxonomic scope" value="Bacteria"/>
</dbReference>
<dbReference type="HOGENOM" id="CLU_006684_3_0_5"/>
<dbReference type="Proteomes" id="UP000001943">
    <property type="component" value="Chromosome"/>
</dbReference>
<dbReference type="GO" id="GO:0005737">
    <property type="term" value="C:cytoplasm"/>
    <property type="evidence" value="ECO:0007669"/>
    <property type="project" value="UniProtKB-SubCell"/>
</dbReference>
<dbReference type="GO" id="GO:0005524">
    <property type="term" value="F:ATP binding"/>
    <property type="evidence" value="ECO:0007669"/>
    <property type="project" value="UniProtKB-UniRule"/>
</dbReference>
<dbReference type="GO" id="GO:0016887">
    <property type="term" value="F:ATP hydrolysis activity"/>
    <property type="evidence" value="ECO:0007669"/>
    <property type="project" value="InterPro"/>
</dbReference>
<dbReference type="GO" id="GO:0140662">
    <property type="term" value="F:ATP-dependent protein folding chaperone"/>
    <property type="evidence" value="ECO:0007669"/>
    <property type="project" value="InterPro"/>
</dbReference>
<dbReference type="GO" id="GO:0051082">
    <property type="term" value="F:unfolded protein binding"/>
    <property type="evidence" value="ECO:0007669"/>
    <property type="project" value="UniProtKB-UniRule"/>
</dbReference>
<dbReference type="CDD" id="cd16927">
    <property type="entry name" value="HATPase_Hsp90-like"/>
    <property type="match status" value="1"/>
</dbReference>
<dbReference type="FunFam" id="3.30.565.10:FF:000009">
    <property type="entry name" value="Molecular chaperone HtpG"/>
    <property type="match status" value="1"/>
</dbReference>
<dbReference type="Gene3D" id="3.30.230.80">
    <property type="match status" value="1"/>
</dbReference>
<dbReference type="Gene3D" id="3.40.50.11260">
    <property type="match status" value="1"/>
</dbReference>
<dbReference type="Gene3D" id="1.20.120.790">
    <property type="entry name" value="Heat shock protein 90, C-terminal domain"/>
    <property type="match status" value="1"/>
</dbReference>
<dbReference type="Gene3D" id="3.30.565.10">
    <property type="entry name" value="Histidine kinase-like ATPase, C-terminal domain"/>
    <property type="match status" value="1"/>
</dbReference>
<dbReference type="HAMAP" id="MF_00505">
    <property type="entry name" value="HSP90"/>
    <property type="match status" value="1"/>
</dbReference>
<dbReference type="InterPro" id="IPR036890">
    <property type="entry name" value="HATPase_C_sf"/>
</dbReference>
<dbReference type="InterPro" id="IPR019805">
    <property type="entry name" value="Heat_shock_protein_90_CS"/>
</dbReference>
<dbReference type="InterPro" id="IPR037196">
    <property type="entry name" value="HSP90_C"/>
</dbReference>
<dbReference type="InterPro" id="IPR001404">
    <property type="entry name" value="Hsp90_fam"/>
</dbReference>
<dbReference type="InterPro" id="IPR020575">
    <property type="entry name" value="Hsp90_N"/>
</dbReference>
<dbReference type="InterPro" id="IPR020568">
    <property type="entry name" value="Ribosomal_Su5_D2-typ_SF"/>
</dbReference>
<dbReference type="NCBIfam" id="NF003555">
    <property type="entry name" value="PRK05218.1"/>
    <property type="match status" value="1"/>
</dbReference>
<dbReference type="PANTHER" id="PTHR11528">
    <property type="entry name" value="HEAT SHOCK PROTEIN 90 FAMILY MEMBER"/>
    <property type="match status" value="1"/>
</dbReference>
<dbReference type="Pfam" id="PF13589">
    <property type="entry name" value="HATPase_c_3"/>
    <property type="match status" value="1"/>
</dbReference>
<dbReference type="Pfam" id="PF00183">
    <property type="entry name" value="HSP90"/>
    <property type="match status" value="1"/>
</dbReference>
<dbReference type="PIRSF" id="PIRSF002583">
    <property type="entry name" value="Hsp90"/>
    <property type="match status" value="1"/>
</dbReference>
<dbReference type="PRINTS" id="PR00775">
    <property type="entry name" value="HEATSHOCK90"/>
</dbReference>
<dbReference type="SMART" id="SM00387">
    <property type="entry name" value="HATPase_c"/>
    <property type="match status" value="1"/>
</dbReference>
<dbReference type="SUPFAM" id="SSF55874">
    <property type="entry name" value="ATPase domain of HSP90 chaperone/DNA topoisomerase II/histidine kinase"/>
    <property type="match status" value="1"/>
</dbReference>
<dbReference type="SUPFAM" id="SSF110942">
    <property type="entry name" value="HSP90 C-terminal domain"/>
    <property type="match status" value="1"/>
</dbReference>
<dbReference type="SUPFAM" id="SSF54211">
    <property type="entry name" value="Ribosomal protein S5 domain 2-like"/>
    <property type="match status" value="1"/>
</dbReference>
<dbReference type="PROSITE" id="PS00298">
    <property type="entry name" value="HSP90"/>
    <property type="match status" value="1"/>
</dbReference>
<gene>
    <name evidence="1" type="primary">htpG</name>
    <name type="ordered locus">APH_0893</name>
</gene>
<keyword id="KW-0067">ATP-binding</keyword>
<keyword id="KW-0143">Chaperone</keyword>
<keyword id="KW-0963">Cytoplasm</keyword>
<keyword id="KW-0547">Nucleotide-binding</keyword>
<keyword id="KW-0346">Stress response</keyword>
<feature type="chain" id="PRO_0000236982" description="Chaperone protein HtpG">
    <location>
        <begin position="1"/>
        <end position="637"/>
    </location>
</feature>
<feature type="region of interest" description="A; substrate-binding" evidence="1">
    <location>
        <begin position="1"/>
        <end position="328"/>
    </location>
</feature>
<feature type="region of interest" description="B" evidence="1">
    <location>
        <begin position="329"/>
        <end position="556"/>
    </location>
</feature>
<feature type="region of interest" description="Disordered" evidence="2">
    <location>
        <begin position="488"/>
        <end position="508"/>
    </location>
</feature>
<feature type="region of interest" description="C" evidence="1">
    <location>
        <begin position="557"/>
        <end position="637"/>
    </location>
</feature>
<feature type="compositionally biased region" description="Basic and acidic residues" evidence="2">
    <location>
        <begin position="494"/>
        <end position="508"/>
    </location>
</feature>
<proteinExistence type="inferred from homology"/>
<reference key="1">
    <citation type="journal article" date="2006" name="PLoS Genet.">
        <title>Comparative genomics of emerging human ehrlichiosis agents.</title>
        <authorList>
            <person name="Dunning Hotopp J.C."/>
            <person name="Lin M."/>
            <person name="Madupu R."/>
            <person name="Crabtree J."/>
            <person name="Angiuoli S.V."/>
            <person name="Eisen J.A."/>
            <person name="Seshadri R."/>
            <person name="Ren Q."/>
            <person name="Wu M."/>
            <person name="Utterback T.R."/>
            <person name="Smith S."/>
            <person name="Lewis M."/>
            <person name="Khouri H."/>
            <person name="Zhang C."/>
            <person name="Niu H."/>
            <person name="Lin Q."/>
            <person name="Ohashi N."/>
            <person name="Zhi N."/>
            <person name="Nelson W.C."/>
            <person name="Brinkac L.M."/>
            <person name="Dodson R.J."/>
            <person name="Rosovitz M.J."/>
            <person name="Sundaram J.P."/>
            <person name="Daugherty S.C."/>
            <person name="Davidsen T."/>
            <person name="Durkin A.S."/>
            <person name="Gwinn M.L."/>
            <person name="Haft D.H."/>
            <person name="Selengut J.D."/>
            <person name="Sullivan S.A."/>
            <person name="Zafar N."/>
            <person name="Zhou L."/>
            <person name="Benahmed F."/>
            <person name="Forberger H."/>
            <person name="Halpin R."/>
            <person name="Mulligan S."/>
            <person name="Robinson J."/>
            <person name="White O."/>
            <person name="Rikihisa Y."/>
            <person name="Tettelin H."/>
        </authorList>
    </citation>
    <scope>NUCLEOTIDE SEQUENCE [LARGE SCALE GENOMIC DNA]</scope>
    <source>
        <strain>HZ</strain>
    </source>
</reference>
<comment type="function">
    <text evidence="1">Molecular chaperone. Has ATPase activity.</text>
</comment>
<comment type="subunit">
    <text evidence="1">Homodimer.</text>
</comment>
<comment type="subcellular location">
    <subcellularLocation>
        <location evidence="1">Cytoplasm</location>
    </subcellularLocation>
</comment>
<comment type="similarity">
    <text evidence="1">Belongs to the heat shock protein 90 family.</text>
</comment>
<sequence length="637" mass="71168">MADIEELKFDAEVGKVLSLVVHSLYTNKDIFLRELLSNASDACDKLRHEFLSNHDLMEEGEELKVVISVDKDSKQLSICDNGIGMNRDELIANLGTIASSGTQRFLEALGGDKAKGYDLIGKFGVGFYSVFMVASEVVVDTCRAGESVGYRWRSSGDGGFTIEKLGEDVPRGTKITLTLKEDESGFLDKFRIEHVVTTYSDHLGYPVYFLDEKGEEEKLNSGIAIWTKPKAEVTAAEHLEFFRSVAHIGSEPWMVIHNKNEGAIEYTNLLYIPSVKPFDLFHPDRRCSVKLYVNRVFITEDNVQIIPQYLRFIRGVIDSSDLPLNISRETLQNNRIVEKIKTSVTKKVLSALKEKAESDHESYSKFWENFGPVLKEGLCEAMDTESREGVLSVCKFHTSACAAGELVSLADYISRMKPGQESIFYLSGDDLESTKRSPQIEKLVSSGIEVILLVDPVDDFWTSVVSEYKGVPFKSVMRVGEKDLEKCIGASDDSGDKTSEDSGESASDKESIGSFIEYLKKVLDGVVSDVRVSKKLTTSLVCLAVPDNSMDIRMERFLREQKQLNYKGNRILEINIDHPIAKSLLKEHEARGESELLNGIVHLLYDEACIIEGEEIRSTVDFASRINGVLAKIFSSK</sequence>
<organism>
    <name type="scientific">Anaplasma phagocytophilum (strain HZ)</name>
    <dbReference type="NCBI Taxonomy" id="212042"/>
    <lineage>
        <taxon>Bacteria</taxon>
        <taxon>Pseudomonadati</taxon>
        <taxon>Pseudomonadota</taxon>
        <taxon>Alphaproteobacteria</taxon>
        <taxon>Rickettsiales</taxon>
        <taxon>Anaplasmataceae</taxon>
        <taxon>Anaplasma</taxon>
        <taxon>phagocytophilum group</taxon>
    </lineage>
</organism>
<name>HTPG_ANAPZ</name>
<protein>
    <recommendedName>
        <fullName evidence="1">Chaperone protein HtpG</fullName>
    </recommendedName>
    <alternativeName>
        <fullName evidence="1">Heat shock protein HtpG</fullName>
    </alternativeName>
    <alternativeName>
        <fullName evidence="1">High temperature protein G</fullName>
    </alternativeName>
</protein>
<accession>Q2GJI3</accession>
<evidence type="ECO:0000255" key="1">
    <source>
        <dbReference type="HAMAP-Rule" id="MF_00505"/>
    </source>
</evidence>
<evidence type="ECO:0000256" key="2">
    <source>
        <dbReference type="SAM" id="MobiDB-lite"/>
    </source>
</evidence>